<proteinExistence type="inferred from homology"/>
<sequence>MFVVIFGRPGCPYCVRAKEHAETLKAKRDDFNYRYVDIHAEGITKADLEKTIGKPVETVPQIFIDEQHIGGCTDFEAYAKENLGLFD</sequence>
<gene>
    <name type="primary">grx</name>
    <name type="ordered locus">VC_1146</name>
</gene>
<comment type="function">
    <text evidence="1">Has a glutathione-disulfide oxidoreductase activity in the presence of NADPH and glutathione reductase. Reduces low molecular weight disulfides and proteins (By similarity).</text>
</comment>
<comment type="subunit">
    <text evidence="1">Monomer.</text>
</comment>
<comment type="subcellular location">
    <subcellularLocation>
        <location evidence="1">Cytoplasm</location>
    </subcellularLocation>
</comment>
<comment type="similarity">
    <text evidence="3">Belongs to the glutaredoxin family.</text>
</comment>
<reference key="1">
    <citation type="journal article" date="2000" name="Nature">
        <title>DNA sequence of both chromosomes of the cholera pathogen Vibrio cholerae.</title>
        <authorList>
            <person name="Heidelberg J.F."/>
            <person name="Eisen J.A."/>
            <person name="Nelson W.C."/>
            <person name="Clayton R.A."/>
            <person name="Gwinn M.L."/>
            <person name="Dodson R.J."/>
            <person name="Haft D.H."/>
            <person name="Hickey E.K."/>
            <person name="Peterson J.D."/>
            <person name="Umayam L.A."/>
            <person name="Gill S.R."/>
            <person name="Nelson K.E."/>
            <person name="Read T.D."/>
            <person name="Tettelin H."/>
            <person name="Richardson D.L."/>
            <person name="Ermolaeva M.D."/>
            <person name="Vamathevan J.J."/>
            <person name="Bass S."/>
            <person name="Qin H."/>
            <person name="Dragoi I."/>
            <person name="Sellers P."/>
            <person name="McDonald L.A."/>
            <person name="Utterback T.R."/>
            <person name="Fleischmann R.D."/>
            <person name="Nierman W.C."/>
            <person name="White O."/>
            <person name="Salzberg S.L."/>
            <person name="Smith H.O."/>
            <person name="Colwell R.R."/>
            <person name="Mekalanos J.J."/>
            <person name="Venter J.C."/>
            <person name="Fraser C.M."/>
        </authorList>
    </citation>
    <scope>NUCLEOTIDE SEQUENCE [LARGE SCALE GENOMIC DNA]</scope>
    <source>
        <strain>ATCC 39315 / El Tor Inaba N16961</strain>
    </source>
</reference>
<name>GLRX_VIBCH</name>
<keyword id="KW-0963">Cytoplasm</keyword>
<keyword id="KW-1015">Disulfide bond</keyword>
<keyword id="KW-0249">Electron transport</keyword>
<keyword id="KW-0676">Redox-active center</keyword>
<keyword id="KW-1185">Reference proteome</keyword>
<keyword id="KW-0813">Transport</keyword>
<dbReference type="EMBL" id="AE003852">
    <property type="protein sequence ID" value="AAF94305.1"/>
    <property type="molecule type" value="Genomic_DNA"/>
</dbReference>
<dbReference type="PIR" id="G82236">
    <property type="entry name" value="G82236"/>
</dbReference>
<dbReference type="RefSeq" id="NP_230791.2">
    <property type="nucleotide sequence ID" value="NC_002505.1"/>
</dbReference>
<dbReference type="RefSeq" id="WP_000498418.1">
    <property type="nucleotide sequence ID" value="NZ_LT906614.1"/>
</dbReference>
<dbReference type="SMR" id="Q9KSW0"/>
<dbReference type="STRING" id="243277.VC_1146"/>
<dbReference type="DNASU" id="2614579"/>
<dbReference type="EnsemblBacteria" id="AAF94305">
    <property type="protein sequence ID" value="AAF94305"/>
    <property type="gene ID" value="VC_1146"/>
</dbReference>
<dbReference type="KEGG" id="vch:VC_1146"/>
<dbReference type="PATRIC" id="fig|243277.26.peg.1095"/>
<dbReference type="eggNOG" id="COG0695">
    <property type="taxonomic scope" value="Bacteria"/>
</dbReference>
<dbReference type="HOGENOM" id="CLU_026126_7_3_6"/>
<dbReference type="Proteomes" id="UP000000584">
    <property type="component" value="Chromosome 1"/>
</dbReference>
<dbReference type="GO" id="GO:0005737">
    <property type="term" value="C:cytoplasm"/>
    <property type="evidence" value="ECO:0000318"/>
    <property type="project" value="GO_Central"/>
</dbReference>
<dbReference type="GO" id="GO:0009055">
    <property type="term" value="F:electron transfer activity"/>
    <property type="evidence" value="ECO:0007669"/>
    <property type="project" value="InterPro"/>
</dbReference>
<dbReference type="GO" id="GO:0015038">
    <property type="term" value="F:glutathione disulfide oxidoreductase activity"/>
    <property type="evidence" value="ECO:0000318"/>
    <property type="project" value="GO_Central"/>
</dbReference>
<dbReference type="GO" id="GO:0015035">
    <property type="term" value="F:protein-disulfide reductase activity"/>
    <property type="evidence" value="ECO:0007669"/>
    <property type="project" value="InterPro"/>
</dbReference>
<dbReference type="GO" id="GO:0045454">
    <property type="term" value="P:cell redox homeostasis"/>
    <property type="evidence" value="ECO:0007669"/>
    <property type="project" value="InterPro"/>
</dbReference>
<dbReference type="GO" id="GO:0034599">
    <property type="term" value="P:cellular response to oxidative stress"/>
    <property type="evidence" value="ECO:0000318"/>
    <property type="project" value="GO_Central"/>
</dbReference>
<dbReference type="CDD" id="cd02066">
    <property type="entry name" value="GRX_family"/>
    <property type="match status" value="1"/>
</dbReference>
<dbReference type="Gene3D" id="3.40.30.10">
    <property type="entry name" value="Glutaredoxin"/>
    <property type="match status" value="1"/>
</dbReference>
<dbReference type="InterPro" id="IPR002109">
    <property type="entry name" value="Glutaredoxin"/>
</dbReference>
<dbReference type="InterPro" id="IPR014025">
    <property type="entry name" value="Glutaredoxin_subgr"/>
</dbReference>
<dbReference type="InterPro" id="IPR011902">
    <property type="entry name" value="GRXA"/>
</dbReference>
<dbReference type="InterPro" id="IPR036249">
    <property type="entry name" value="Thioredoxin-like_sf"/>
</dbReference>
<dbReference type="NCBIfam" id="TIGR02183">
    <property type="entry name" value="GRXA"/>
    <property type="match status" value="1"/>
</dbReference>
<dbReference type="NCBIfam" id="NF008401">
    <property type="entry name" value="PRK11200.1"/>
    <property type="match status" value="1"/>
</dbReference>
<dbReference type="PANTHER" id="PTHR45694:SF28">
    <property type="entry name" value="GLUTAREDOXIN 1"/>
    <property type="match status" value="1"/>
</dbReference>
<dbReference type="PANTHER" id="PTHR45694">
    <property type="entry name" value="GLUTAREDOXIN 2"/>
    <property type="match status" value="1"/>
</dbReference>
<dbReference type="Pfam" id="PF00462">
    <property type="entry name" value="Glutaredoxin"/>
    <property type="match status" value="1"/>
</dbReference>
<dbReference type="PRINTS" id="PR00160">
    <property type="entry name" value="GLUTAREDOXIN"/>
</dbReference>
<dbReference type="SUPFAM" id="SSF52833">
    <property type="entry name" value="Thioredoxin-like"/>
    <property type="match status" value="1"/>
</dbReference>
<dbReference type="PROSITE" id="PS51354">
    <property type="entry name" value="GLUTAREDOXIN_2"/>
    <property type="match status" value="1"/>
</dbReference>
<evidence type="ECO:0000250" key="1"/>
<evidence type="ECO:0000255" key="2">
    <source>
        <dbReference type="PROSITE-ProRule" id="PRU00686"/>
    </source>
</evidence>
<evidence type="ECO:0000305" key="3"/>
<organism>
    <name type="scientific">Vibrio cholerae serotype O1 (strain ATCC 39315 / El Tor Inaba N16961)</name>
    <dbReference type="NCBI Taxonomy" id="243277"/>
    <lineage>
        <taxon>Bacteria</taxon>
        <taxon>Pseudomonadati</taxon>
        <taxon>Pseudomonadota</taxon>
        <taxon>Gammaproteobacteria</taxon>
        <taxon>Vibrionales</taxon>
        <taxon>Vibrionaceae</taxon>
        <taxon>Vibrio</taxon>
    </lineage>
</organism>
<accession>Q9KSW0</accession>
<feature type="chain" id="PRO_0000141596" description="Glutaredoxin">
    <location>
        <begin position="1"/>
        <end position="87"/>
    </location>
</feature>
<feature type="domain" description="Glutaredoxin" evidence="2">
    <location>
        <begin position="1"/>
        <end position="87"/>
    </location>
</feature>
<feature type="disulfide bond" description="Redox-active" evidence="1">
    <location>
        <begin position="11"/>
        <end position="14"/>
    </location>
</feature>
<protein>
    <recommendedName>
        <fullName>Glutaredoxin</fullName>
    </recommendedName>
</protein>